<name>RIFK_METAC</name>
<reference key="1">
    <citation type="journal article" date="2002" name="Genome Res.">
        <title>The genome of Methanosarcina acetivorans reveals extensive metabolic and physiological diversity.</title>
        <authorList>
            <person name="Galagan J.E."/>
            <person name="Nusbaum C."/>
            <person name="Roy A."/>
            <person name="Endrizzi M.G."/>
            <person name="Macdonald P."/>
            <person name="FitzHugh W."/>
            <person name="Calvo S."/>
            <person name="Engels R."/>
            <person name="Smirnov S."/>
            <person name="Atnoor D."/>
            <person name="Brown A."/>
            <person name="Allen N."/>
            <person name="Naylor J."/>
            <person name="Stange-Thomann N."/>
            <person name="DeArellano K."/>
            <person name="Johnson R."/>
            <person name="Linton L."/>
            <person name="McEwan P."/>
            <person name="McKernan K."/>
            <person name="Talamas J."/>
            <person name="Tirrell A."/>
            <person name="Ye W."/>
            <person name="Zimmer A."/>
            <person name="Barber R.D."/>
            <person name="Cann I."/>
            <person name="Graham D.E."/>
            <person name="Grahame D.A."/>
            <person name="Guss A.M."/>
            <person name="Hedderich R."/>
            <person name="Ingram-Smith C."/>
            <person name="Kuettner H.C."/>
            <person name="Krzycki J.A."/>
            <person name="Leigh J.A."/>
            <person name="Li W."/>
            <person name="Liu J."/>
            <person name="Mukhopadhyay B."/>
            <person name="Reeve J.N."/>
            <person name="Smith K."/>
            <person name="Springer T.A."/>
            <person name="Umayam L.A."/>
            <person name="White O."/>
            <person name="White R.H."/>
            <person name="de Macario E.C."/>
            <person name="Ferry J.G."/>
            <person name="Jarrell K.F."/>
            <person name="Jing H."/>
            <person name="Macario A.J.L."/>
            <person name="Paulsen I.T."/>
            <person name="Pritchett M."/>
            <person name="Sowers K.R."/>
            <person name="Swanson R.V."/>
            <person name="Zinder S.H."/>
            <person name="Lander E."/>
            <person name="Metcalf W.W."/>
            <person name="Birren B."/>
        </authorList>
    </citation>
    <scope>NUCLEOTIDE SEQUENCE [LARGE SCALE GENOMIC DNA]</scope>
    <source>
        <strain>ATCC 35395 / DSM 2834 / JCM 12185 / C2A</strain>
    </source>
</reference>
<evidence type="ECO:0000250" key="1"/>
<evidence type="ECO:0000305" key="2"/>
<accession>Q8TT90</accession>
<comment type="function">
    <text evidence="1">Catalyzes the CTP-dependent phosphorylation of riboflavin (vitamin B2) to form flavin mononucleotide (FMN).</text>
</comment>
<comment type="catalytic activity">
    <reaction>
        <text>riboflavin + CTP = CDP + FMN + H(+)</text>
        <dbReference type="Rhea" id="RHEA:25021"/>
        <dbReference type="ChEBI" id="CHEBI:15378"/>
        <dbReference type="ChEBI" id="CHEBI:37563"/>
        <dbReference type="ChEBI" id="CHEBI:57986"/>
        <dbReference type="ChEBI" id="CHEBI:58069"/>
        <dbReference type="ChEBI" id="CHEBI:58210"/>
        <dbReference type="EC" id="2.7.1.161"/>
    </reaction>
</comment>
<comment type="cofactor">
    <cofactor evidence="1">
        <name>Mg(2+)</name>
        <dbReference type="ChEBI" id="CHEBI:18420"/>
    </cofactor>
    <text evidence="1">Binds 1 Mg(2+) ion per subunit.</text>
</comment>
<comment type="pathway">
    <text>Cofactor biosynthesis; FMN biosynthesis; FMN from riboflavin (CTP route): step 1/1.</text>
</comment>
<comment type="similarity">
    <text evidence="2">Belongs to the archaeal riboflavin kinase family.</text>
</comment>
<sequence>MRLKIKAIWVPTVPDIEYLKKLALRGAVNKTVKVSSSEFHKHTGDSSKTAARKLKQMEEERLIERKIVPGGQLIKMTEKGIEILKNEYIEYSRIFSSEPDVLELEGNVLKGLGEGQYYINIPGYRNQFEEKLNFVPFPGTLNVQLSESSSALRNRLKEMPAVRIDGFNDGERTFGGGNCYPIKVEGIEAAVVVPDRTHYPADLIEIIAPVKLRDALKLKDGDRIVTRVKKQGMEGQK</sequence>
<proteinExistence type="inferred from homology"/>
<keyword id="KW-0285">Flavoprotein</keyword>
<keyword id="KW-0288">FMN</keyword>
<keyword id="KW-0418">Kinase</keyword>
<keyword id="KW-0460">Magnesium</keyword>
<keyword id="KW-0479">Metal-binding</keyword>
<keyword id="KW-0547">Nucleotide-binding</keyword>
<keyword id="KW-1185">Reference proteome</keyword>
<keyword id="KW-0808">Transferase</keyword>
<dbReference type="EC" id="2.7.1.161"/>
<dbReference type="EMBL" id="AE010299">
    <property type="protein sequence ID" value="AAM03991.1"/>
    <property type="molecule type" value="Genomic_DNA"/>
</dbReference>
<dbReference type="RefSeq" id="WP_011020596.1">
    <property type="nucleotide sequence ID" value="NC_003552.1"/>
</dbReference>
<dbReference type="SMR" id="Q8TT90"/>
<dbReference type="FunCoup" id="Q8TT90">
    <property type="interactions" value="18"/>
</dbReference>
<dbReference type="STRING" id="188937.MA_0547"/>
<dbReference type="EnsemblBacteria" id="AAM03991">
    <property type="protein sequence ID" value="AAM03991"/>
    <property type="gene ID" value="MA_0547"/>
</dbReference>
<dbReference type="GeneID" id="1472439"/>
<dbReference type="KEGG" id="mac:MA_0547"/>
<dbReference type="HOGENOM" id="CLU_088476_0_0_2"/>
<dbReference type="InParanoid" id="Q8TT90"/>
<dbReference type="OrthoDB" id="30955at2157"/>
<dbReference type="PhylomeDB" id="Q8TT90"/>
<dbReference type="UniPathway" id="UPA00276">
    <property type="reaction ID" value="UER00929"/>
</dbReference>
<dbReference type="Proteomes" id="UP000002487">
    <property type="component" value="Chromosome"/>
</dbReference>
<dbReference type="GO" id="GO:0000287">
    <property type="term" value="F:magnesium ion binding"/>
    <property type="evidence" value="ECO:0007669"/>
    <property type="project" value="UniProtKB-UniRule"/>
</dbReference>
<dbReference type="GO" id="GO:0000166">
    <property type="term" value="F:nucleotide binding"/>
    <property type="evidence" value="ECO:0007669"/>
    <property type="project" value="UniProtKB-UniRule"/>
</dbReference>
<dbReference type="GO" id="GO:0008531">
    <property type="term" value="F:riboflavin kinase activity"/>
    <property type="evidence" value="ECO:0007669"/>
    <property type="project" value="InterPro"/>
</dbReference>
<dbReference type="GO" id="GO:0009398">
    <property type="term" value="P:FMN biosynthetic process"/>
    <property type="evidence" value="ECO:0007669"/>
    <property type="project" value="UniProtKB-UniRule"/>
</dbReference>
<dbReference type="GO" id="GO:0009231">
    <property type="term" value="P:riboflavin biosynthetic process"/>
    <property type="evidence" value="ECO:0007669"/>
    <property type="project" value="InterPro"/>
</dbReference>
<dbReference type="Gene3D" id="2.40.30.30">
    <property type="entry name" value="Riboflavin kinase-like"/>
    <property type="match status" value="1"/>
</dbReference>
<dbReference type="Gene3D" id="1.10.10.10">
    <property type="entry name" value="Winged helix-like DNA-binding domain superfamily/Winged helix DNA-binding domain"/>
    <property type="match status" value="1"/>
</dbReference>
<dbReference type="HAMAP" id="MF_01285">
    <property type="entry name" value="Riboflavin_kinase"/>
    <property type="match status" value="1"/>
</dbReference>
<dbReference type="InterPro" id="IPR039063">
    <property type="entry name" value="RibK_CTP-dep"/>
</dbReference>
<dbReference type="InterPro" id="IPR023470">
    <property type="entry name" value="Riboflavin_kinase_archaeal"/>
</dbReference>
<dbReference type="InterPro" id="IPR023602">
    <property type="entry name" value="Riboflavin_kinase_CTP-dep"/>
</dbReference>
<dbReference type="InterPro" id="IPR023465">
    <property type="entry name" value="Riboflavin_kinase_dom_sf"/>
</dbReference>
<dbReference type="InterPro" id="IPR036388">
    <property type="entry name" value="WH-like_DNA-bd_sf"/>
</dbReference>
<dbReference type="InterPro" id="IPR036390">
    <property type="entry name" value="WH_DNA-bd_sf"/>
</dbReference>
<dbReference type="NCBIfam" id="NF010762">
    <property type="entry name" value="PRK14165.1"/>
    <property type="match status" value="1"/>
</dbReference>
<dbReference type="PANTHER" id="PTHR40706">
    <property type="entry name" value="RIBOFLAVIN KINASE"/>
    <property type="match status" value="1"/>
</dbReference>
<dbReference type="PANTHER" id="PTHR40706:SF1">
    <property type="entry name" value="RIBOFLAVIN KINASE"/>
    <property type="match status" value="1"/>
</dbReference>
<dbReference type="Pfam" id="PF01982">
    <property type="entry name" value="CTP-dep_RFKase"/>
    <property type="match status" value="1"/>
</dbReference>
<dbReference type="SUPFAM" id="SSF82114">
    <property type="entry name" value="Riboflavin kinase-like"/>
    <property type="match status" value="1"/>
</dbReference>
<dbReference type="SUPFAM" id="SSF46785">
    <property type="entry name" value="Winged helix' DNA-binding domain"/>
    <property type="match status" value="1"/>
</dbReference>
<gene>
    <name type="primary">ribK</name>
    <name type="ordered locus">MA_0547</name>
</gene>
<protein>
    <recommendedName>
        <fullName>Riboflavin kinase</fullName>
        <shortName>RFK</shortName>
        <ecNumber>2.7.1.161</ecNumber>
    </recommendedName>
    <alternativeName>
        <fullName>CTP-dependent riboflavin kinase</fullName>
    </alternativeName>
    <alternativeName>
        <fullName>CTP:riboflavin 5'-phosphotransferase</fullName>
    </alternativeName>
    <alternativeName>
        <fullName>Flavokinase</fullName>
    </alternativeName>
</protein>
<feature type="chain" id="PRO_0000322087" description="Riboflavin kinase">
    <location>
        <begin position="1"/>
        <end position="237"/>
    </location>
</feature>
<feature type="region of interest" description="Unknown">
    <location>
        <begin position="1"/>
        <end position="101"/>
    </location>
</feature>
<feature type="region of interest" description="Riboflavin kinase">
    <location>
        <begin position="102"/>
        <end position="237"/>
    </location>
</feature>
<feature type="binding site" evidence="1">
    <location>
        <begin position="111"/>
        <end position="116"/>
    </location>
    <ligand>
        <name>CDP</name>
        <dbReference type="ChEBI" id="CHEBI:58069"/>
    </ligand>
</feature>
<feature type="binding site" evidence="1">
    <location>
        <position position="140"/>
    </location>
    <ligand>
        <name>Mg(2+)</name>
        <dbReference type="ChEBI" id="CHEBI:18420"/>
    </ligand>
</feature>
<feature type="binding site" evidence="1">
    <location>
        <position position="142"/>
    </location>
    <ligand>
        <name>Mg(2+)</name>
        <dbReference type="ChEBI" id="CHEBI:18420"/>
    </ligand>
</feature>
<feature type="binding site" evidence="1">
    <location>
        <position position="197"/>
    </location>
    <ligand>
        <name>FMN</name>
        <dbReference type="ChEBI" id="CHEBI:58210"/>
    </ligand>
</feature>
<feature type="binding site" evidence="1">
    <location>
        <position position="205"/>
    </location>
    <ligand>
        <name>FMN</name>
        <dbReference type="ChEBI" id="CHEBI:58210"/>
    </ligand>
</feature>
<feature type="binding site" evidence="1">
    <location>
        <begin position="210"/>
        <end position="213"/>
    </location>
    <ligand>
        <name>CDP</name>
        <dbReference type="ChEBI" id="CHEBI:58069"/>
    </ligand>
</feature>
<organism>
    <name type="scientific">Methanosarcina acetivorans (strain ATCC 35395 / DSM 2834 / JCM 12185 / C2A)</name>
    <dbReference type="NCBI Taxonomy" id="188937"/>
    <lineage>
        <taxon>Archaea</taxon>
        <taxon>Methanobacteriati</taxon>
        <taxon>Methanobacteriota</taxon>
        <taxon>Stenosarchaea group</taxon>
        <taxon>Methanomicrobia</taxon>
        <taxon>Methanosarcinales</taxon>
        <taxon>Methanosarcinaceae</taxon>
        <taxon>Methanosarcina</taxon>
    </lineage>
</organism>